<evidence type="ECO:0000255" key="1">
    <source>
        <dbReference type="HAMAP-Rule" id="MF_00373"/>
    </source>
</evidence>
<evidence type="ECO:0000256" key="2">
    <source>
        <dbReference type="SAM" id="MobiDB-lite"/>
    </source>
</evidence>
<evidence type="ECO:0000305" key="3"/>
<dbReference type="EMBL" id="CP000563">
    <property type="protein sequence ID" value="ABN59910.1"/>
    <property type="molecule type" value="Genomic_DNA"/>
</dbReference>
<dbReference type="RefSeq" id="WP_006079870.1">
    <property type="nucleotide sequence ID" value="NC_009052.1"/>
</dbReference>
<dbReference type="SMR" id="A3CZJ7"/>
<dbReference type="STRING" id="325240.Sbal_0378"/>
<dbReference type="GeneID" id="94729700"/>
<dbReference type="KEGG" id="sbl:Sbal_0378"/>
<dbReference type="HOGENOM" id="CLU_064548_3_1_6"/>
<dbReference type="OrthoDB" id="9805609at2"/>
<dbReference type="Proteomes" id="UP000001557">
    <property type="component" value="Chromosome"/>
</dbReference>
<dbReference type="GO" id="GO:0022625">
    <property type="term" value="C:cytosolic large ribosomal subunit"/>
    <property type="evidence" value="ECO:0007669"/>
    <property type="project" value="TreeGrafter"/>
</dbReference>
<dbReference type="GO" id="GO:0003735">
    <property type="term" value="F:structural constituent of ribosome"/>
    <property type="evidence" value="ECO:0007669"/>
    <property type="project" value="InterPro"/>
</dbReference>
<dbReference type="GO" id="GO:0006412">
    <property type="term" value="P:translation"/>
    <property type="evidence" value="ECO:0007669"/>
    <property type="project" value="UniProtKB-UniRule"/>
</dbReference>
<dbReference type="FunFam" id="2.30.170.40:FF:000001">
    <property type="entry name" value="50S ribosomal protein L28"/>
    <property type="match status" value="1"/>
</dbReference>
<dbReference type="Gene3D" id="2.30.170.40">
    <property type="entry name" value="Ribosomal protein L28/L24"/>
    <property type="match status" value="1"/>
</dbReference>
<dbReference type="HAMAP" id="MF_00373">
    <property type="entry name" value="Ribosomal_bL28"/>
    <property type="match status" value="1"/>
</dbReference>
<dbReference type="InterPro" id="IPR026569">
    <property type="entry name" value="Ribosomal_bL28"/>
</dbReference>
<dbReference type="InterPro" id="IPR034704">
    <property type="entry name" value="Ribosomal_bL28/bL31-like_sf"/>
</dbReference>
<dbReference type="InterPro" id="IPR001383">
    <property type="entry name" value="Ribosomal_bL28_bact-type"/>
</dbReference>
<dbReference type="InterPro" id="IPR037147">
    <property type="entry name" value="Ribosomal_bL28_sf"/>
</dbReference>
<dbReference type="NCBIfam" id="TIGR00009">
    <property type="entry name" value="L28"/>
    <property type="match status" value="1"/>
</dbReference>
<dbReference type="PANTHER" id="PTHR13528">
    <property type="entry name" value="39S RIBOSOMAL PROTEIN L28, MITOCHONDRIAL"/>
    <property type="match status" value="1"/>
</dbReference>
<dbReference type="PANTHER" id="PTHR13528:SF2">
    <property type="entry name" value="LARGE RIBOSOMAL SUBUNIT PROTEIN BL28M"/>
    <property type="match status" value="1"/>
</dbReference>
<dbReference type="Pfam" id="PF00830">
    <property type="entry name" value="Ribosomal_L28"/>
    <property type="match status" value="1"/>
</dbReference>
<dbReference type="SUPFAM" id="SSF143800">
    <property type="entry name" value="L28p-like"/>
    <property type="match status" value="1"/>
</dbReference>
<reference key="1">
    <citation type="submission" date="2007-02" db="EMBL/GenBank/DDBJ databases">
        <title>Complete sequence of chromosome of Shewanella baltica OS155.</title>
        <authorList>
            <consortium name="US DOE Joint Genome Institute"/>
            <person name="Copeland A."/>
            <person name="Lucas S."/>
            <person name="Lapidus A."/>
            <person name="Barry K."/>
            <person name="Detter J.C."/>
            <person name="Glavina del Rio T."/>
            <person name="Hammon N."/>
            <person name="Israni S."/>
            <person name="Dalin E."/>
            <person name="Tice H."/>
            <person name="Pitluck S."/>
            <person name="Sims D.R."/>
            <person name="Brettin T."/>
            <person name="Bruce D."/>
            <person name="Han C."/>
            <person name="Tapia R."/>
            <person name="Brainard J."/>
            <person name="Schmutz J."/>
            <person name="Larimer F."/>
            <person name="Land M."/>
            <person name="Hauser L."/>
            <person name="Kyrpides N."/>
            <person name="Mikhailova N."/>
            <person name="Brettar I."/>
            <person name="Klappenbach J."/>
            <person name="Konstantinidis K."/>
            <person name="Rodrigues J."/>
            <person name="Tiedje J."/>
            <person name="Richardson P."/>
        </authorList>
    </citation>
    <scope>NUCLEOTIDE SEQUENCE [LARGE SCALE GENOMIC DNA]</scope>
    <source>
        <strain>OS155 / ATCC BAA-1091</strain>
    </source>
</reference>
<organism>
    <name type="scientific">Shewanella baltica (strain OS155 / ATCC BAA-1091)</name>
    <dbReference type="NCBI Taxonomy" id="325240"/>
    <lineage>
        <taxon>Bacteria</taxon>
        <taxon>Pseudomonadati</taxon>
        <taxon>Pseudomonadota</taxon>
        <taxon>Gammaproteobacteria</taxon>
        <taxon>Alteromonadales</taxon>
        <taxon>Shewanellaceae</taxon>
        <taxon>Shewanella</taxon>
    </lineage>
</organism>
<keyword id="KW-1185">Reference proteome</keyword>
<keyword id="KW-0687">Ribonucleoprotein</keyword>
<keyword id="KW-0689">Ribosomal protein</keyword>
<accession>A3CZJ7</accession>
<feature type="chain" id="PRO_1000007346" description="Large ribosomal subunit protein bL28">
    <location>
        <begin position="1"/>
        <end position="78"/>
    </location>
</feature>
<feature type="region of interest" description="Disordered" evidence="2">
    <location>
        <begin position="1"/>
        <end position="21"/>
    </location>
</feature>
<name>RL28_SHEB5</name>
<comment type="similarity">
    <text evidence="1">Belongs to the bacterial ribosomal protein bL28 family.</text>
</comment>
<proteinExistence type="inferred from homology"/>
<gene>
    <name evidence="1" type="primary">rpmB</name>
    <name type="ordered locus">Sbal_0378</name>
</gene>
<sequence>MSRVCQVTGKKPMVGNNRSHAKNATRRRFLPNLQNHRFWLEEEKRFVQLRVSTKGIRLIDKKGIEVVVAELRARGEKV</sequence>
<protein>
    <recommendedName>
        <fullName evidence="1">Large ribosomal subunit protein bL28</fullName>
    </recommendedName>
    <alternativeName>
        <fullName evidence="3">50S ribosomal protein L28</fullName>
    </alternativeName>
</protein>